<reference key="1">
    <citation type="journal article" date="1990" name="Eur. J. Biochem.">
        <title>Primary structure and functional expression of the alpha-, beta-, gamma-, delta- and epsilon-subunits of the acetylcholine receptor from rat muscle.</title>
        <authorList>
            <person name="Witzemann V."/>
            <person name="Stein E."/>
            <person name="Barg B."/>
            <person name="Konno T."/>
            <person name="Koenen M."/>
            <person name="Kues W."/>
            <person name="Criado M."/>
            <person name="Hofmann M."/>
            <person name="Sakmann B."/>
        </authorList>
    </citation>
    <scope>NUCLEOTIDE SEQUENCE [MRNA]</scope>
    <source>
        <tissue>Muscle</tissue>
    </source>
</reference>
<accession>P25109</accession>
<name>ACHB_RAT</name>
<feature type="signal peptide" evidence="1">
    <location>
        <begin position="1"/>
        <end position="23"/>
    </location>
</feature>
<feature type="chain" id="PRO_0000000317" description="Acetylcholine receptor subunit beta">
    <location>
        <begin position="24"/>
        <end position="501"/>
    </location>
</feature>
<feature type="topological domain" description="Extracellular" evidence="4">
    <location>
        <begin position="24"/>
        <end position="244"/>
    </location>
</feature>
<feature type="transmembrane region" description="Helical" evidence="4">
    <location>
        <begin position="245"/>
        <end position="269"/>
    </location>
</feature>
<feature type="transmembrane region" description="Helical" evidence="4">
    <location>
        <begin position="277"/>
        <end position="295"/>
    </location>
</feature>
<feature type="transmembrane region" description="Helical" evidence="4">
    <location>
        <begin position="311"/>
        <end position="332"/>
    </location>
</feature>
<feature type="topological domain" description="Cytoplasmic" evidence="4">
    <location>
        <begin position="333"/>
        <end position="469"/>
    </location>
</feature>
<feature type="transmembrane region" description="Helical" evidence="4">
    <location>
        <begin position="470"/>
        <end position="488"/>
    </location>
</feature>
<feature type="region of interest" description="Disordered" evidence="5">
    <location>
        <begin position="362"/>
        <end position="381"/>
    </location>
</feature>
<feature type="compositionally biased region" description="Basic and acidic residues" evidence="5">
    <location>
        <begin position="363"/>
        <end position="375"/>
    </location>
</feature>
<feature type="modified residue" description="Phosphotyrosine; by Tyr-kinases" evidence="1">
    <location>
        <position position="390"/>
    </location>
</feature>
<feature type="glycosylation site" description="N-linked (GlcNAc...) asparagine" evidence="4">
    <location>
        <position position="164"/>
    </location>
</feature>
<feature type="disulfide bond" evidence="1">
    <location>
        <begin position="151"/>
        <end position="165"/>
    </location>
</feature>
<gene>
    <name type="primary">Chrnb1</name>
    <name type="synonym">Acrb</name>
</gene>
<evidence type="ECO:0000250" key="1"/>
<evidence type="ECO:0000250" key="2">
    <source>
        <dbReference type="UniProtKB" id="P04758"/>
    </source>
</evidence>
<evidence type="ECO:0000250" key="3">
    <source>
        <dbReference type="UniProtKB" id="P11230"/>
    </source>
</evidence>
<evidence type="ECO:0000255" key="4"/>
<evidence type="ECO:0000256" key="5">
    <source>
        <dbReference type="SAM" id="MobiDB-lite"/>
    </source>
</evidence>
<evidence type="ECO:0000305" key="6"/>
<protein>
    <recommendedName>
        <fullName>Acetylcholine receptor subunit beta</fullName>
    </recommendedName>
</protein>
<dbReference type="EMBL" id="X74833">
    <property type="protein sequence ID" value="CAA52827.1"/>
    <property type="molecule type" value="mRNA"/>
</dbReference>
<dbReference type="PIR" id="S13873">
    <property type="entry name" value="S13873"/>
</dbReference>
<dbReference type="RefSeq" id="NP_036660.1">
    <property type="nucleotide sequence ID" value="NM_012528.4"/>
</dbReference>
<dbReference type="SMR" id="P25109"/>
<dbReference type="ComplexPortal" id="CPX-253">
    <property type="entry name" value="Muscle-type nicotinic acetylcholine receptor complex, alpha1-beta1-delta-gamma"/>
</dbReference>
<dbReference type="ComplexPortal" id="CPX-258">
    <property type="entry name" value="Muscle-type nicotinic acetylcholine receptor complex, alpha1-beta1-delta-epsilon"/>
</dbReference>
<dbReference type="FunCoup" id="P25109">
    <property type="interactions" value="213"/>
</dbReference>
<dbReference type="STRING" id="10116.ENSRNOP00000019947"/>
<dbReference type="BindingDB" id="P25109"/>
<dbReference type="ChEMBL" id="CHEMBL3885509"/>
<dbReference type="ChEMBL" id="CHEMBL4523658"/>
<dbReference type="DrugCentral" id="P25109"/>
<dbReference type="GlyCosmos" id="P25109">
    <property type="glycosylation" value="1 site, No reported glycans"/>
</dbReference>
<dbReference type="GlyGen" id="P25109">
    <property type="glycosylation" value="1 site"/>
</dbReference>
<dbReference type="iPTMnet" id="P25109"/>
<dbReference type="PhosphoSitePlus" id="P25109"/>
<dbReference type="PaxDb" id="10116-ENSRNOP00000019947"/>
<dbReference type="Ensembl" id="ENSRNOT00000110050.1">
    <property type="protein sequence ID" value="ENSRNOP00000089285.1"/>
    <property type="gene ID" value="ENSRNOG00000014698.4"/>
</dbReference>
<dbReference type="GeneID" id="24261"/>
<dbReference type="KEGG" id="rno:24261"/>
<dbReference type="UCSC" id="RGD:2349">
    <property type="organism name" value="rat"/>
</dbReference>
<dbReference type="AGR" id="RGD:2349"/>
<dbReference type="CTD" id="1140"/>
<dbReference type="RGD" id="2349">
    <property type="gene designation" value="Chrnb1"/>
</dbReference>
<dbReference type="eggNOG" id="KOG3645">
    <property type="taxonomic scope" value="Eukaryota"/>
</dbReference>
<dbReference type="GeneTree" id="ENSGT00940000158661"/>
<dbReference type="HOGENOM" id="CLU_018074_1_4_1"/>
<dbReference type="InParanoid" id="P25109"/>
<dbReference type="PhylomeDB" id="P25109"/>
<dbReference type="TreeFam" id="TF315605"/>
<dbReference type="PRO" id="PR:P25109"/>
<dbReference type="Proteomes" id="UP000002494">
    <property type="component" value="Chromosome 10"/>
</dbReference>
<dbReference type="Bgee" id="ENSRNOG00000014698">
    <property type="expression patterns" value="Expressed in skeletal muscle tissue and 16 other cell types or tissues"/>
</dbReference>
<dbReference type="GO" id="GO:0005892">
    <property type="term" value="C:acetylcholine-gated channel complex"/>
    <property type="evidence" value="ECO:0000314"/>
    <property type="project" value="RGD"/>
</dbReference>
<dbReference type="GO" id="GO:0031594">
    <property type="term" value="C:neuromuscular junction"/>
    <property type="evidence" value="ECO:0000266"/>
    <property type="project" value="RGD"/>
</dbReference>
<dbReference type="GO" id="GO:0043005">
    <property type="term" value="C:neuron projection"/>
    <property type="evidence" value="ECO:0000318"/>
    <property type="project" value="GO_Central"/>
</dbReference>
<dbReference type="GO" id="GO:0005886">
    <property type="term" value="C:plasma membrane"/>
    <property type="evidence" value="ECO:0000266"/>
    <property type="project" value="RGD"/>
</dbReference>
<dbReference type="GO" id="GO:0099634">
    <property type="term" value="C:postsynaptic specialization membrane"/>
    <property type="evidence" value="ECO:0000266"/>
    <property type="project" value="RGD"/>
</dbReference>
<dbReference type="GO" id="GO:0045202">
    <property type="term" value="C:synapse"/>
    <property type="evidence" value="ECO:0000266"/>
    <property type="project" value="RGD"/>
</dbReference>
<dbReference type="GO" id="GO:0042166">
    <property type="term" value="F:acetylcholine binding"/>
    <property type="evidence" value="ECO:0000266"/>
    <property type="project" value="RGD"/>
</dbReference>
<dbReference type="GO" id="GO:0015464">
    <property type="term" value="F:acetylcholine receptor activity"/>
    <property type="evidence" value="ECO:0000318"/>
    <property type="project" value="GO_Central"/>
</dbReference>
<dbReference type="GO" id="GO:0022848">
    <property type="term" value="F:acetylcholine-gated monoatomic cation-selective channel activity"/>
    <property type="evidence" value="ECO:0000314"/>
    <property type="project" value="RGD"/>
</dbReference>
<dbReference type="GO" id="GO:0015267">
    <property type="term" value="F:channel activity"/>
    <property type="evidence" value="ECO:0000266"/>
    <property type="project" value="RGD"/>
</dbReference>
<dbReference type="GO" id="GO:0015276">
    <property type="term" value="F:ligand-gated monoatomic ion channel activity"/>
    <property type="evidence" value="ECO:0000314"/>
    <property type="project" value="RGD"/>
</dbReference>
<dbReference type="GO" id="GO:1904315">
    <property type="term" value="F:transmitter-gated monoatomic ion channel activity involved in regulation of postsynaptic membrane potential"/>
    <property type="evidence" value="ECO:0000266"/>
    <property type="project" value="RGD"/>
</dbReference>
<dbReference type="GO" id="GO:0095500">
    <property type="term" value="P:acetylcholine receptor signaling pathway"/>
    <property type="evidence" value="ECO:0000318"/>
    <property type="project" value="GO_Central"/>
</dbReference>
<dbReference type="GO" id="GO:0035095">
    <property type="term" value="P:behavioral response to nicotine"/>
    <property type="evidence" value="ECO:0000266"/>
    <property type="project" value="RGD"/>
</dbReference>
<dbReference type="GO" id="GO:0007268">
    <property type="term" value="P:chemical synaptic transmission"/>
    <property type="evidence" value="ECO:0000318"/>
    <property type="project" value="GO_Central"/>
</dbReference>
<dbReference type="GO" id="GO:0051899">
    <property type="term" value="P:membrane depolarization"/>
    <property type="evidence" value="ECO:0000318"/>
    <property type="project" value="GO_Central"/>
</dbReference>
<dbReference type="GO" id="GO:0006812">
    <property type="term" value="P:monoatomic cation transport"/>
    <property type="evidence" value="ECO:0000314"/>
    <property type="project" value="RGD"/>
</dbReference>
<dbReference type="GO" id="GO:0034220">
    <property type="term" value="P:monoatomic ion transmembrane transport"/>
    <property type="evidence" value="ECO:0000318"/>
    <property type="project" value="GO_Central"/>
</dbReference>
<dbReference type="GO" id="GO:0055001">
    <property type="term" value="P:muscle cell development"/>
    <property type="evidence" value="ECO:0000266"/>
    <property type="project" value="RGD"/>
</dbReference>
<dbReference type="GO" id="GO:0006936">
    <property type="term" value="P:muscle contraction"/>
    <property type="evidence" value="ECO:0000266"/>
    <property type="project" value="RGD"/>
</dbReference>
<dbReference type="GO" id="GO:0050877">
    <property type="term" value="P:nervous system process"/>
    <property type="evidence" value="ECO:0000266"/>
    <property type="project" value="RGD"/>
</dbReference>
<dbReference type="GO" id="GO:0007274">
    <property type="term" value="P:neuromuscular synaptic transmission"/>
    <property type="evidence" value="ECO:0000266"/>
    <property type="project" value="RGD"/>
</dbReference>
<dbReference type="GO" id="GO:0001941">
    <property type="term" value="P:postsynaptic membrane organization"/>
    <property type="evidence" value="ECO:0000266"/>
    <property type="project" value="RGD"/>
</dbReference>
<dbReference type="GO" id="GO:0042391">
    <property type="term" value="P:regulation of membrane potential"/>
    <property type="evidence" value="ECO:0000266"/>
    <property type="project" value="RGD"/>
</dbReference>
<dbReference type="GO" id="GO:0007165">
    <property type="term" value="P:signal transduction"/>
    <property type="evidence" value="ECO:0000266"/>
    <property type="project" value="RGD"/>
</dbReference>
<dbReference type="GO" id="GO:0003009">
    <property type="term" value="P:skeletal muscle contraction"/>
    <property type="evidence" value="ECO:0000314"/>
    <property type="project" value="RGD"/>
</dbReference>
<dbReference type="GO" id="GO:0007271">
    <property type="term" value="P:synaptic transmission, cholinergic"/>
    <property type="evidence" value="ECO:0000266"/>
    <property type="project" value="RGD"/>
</dbReference>
<dbReference type="CDD" id="cd19024">
    <property type="entry name" value="LGIC_ECD_nAChR_B1"/>
    <property type="match status" value="1"/>
</dbReference>
<dbReference type="CDD" id="cd19064">
    <property type="entry name" value="LGIC_TM_nAChR"/>
    <property type="match status" value="1"/>
</dbReference>
<dbReference type="FunFam" id="1.20.58.390:FF:000026">
    <property type="entry name" value="Cholinergic receptor nicotinic beta 1 subunit"/>
    <property type="match status" value="1"/>
</dbReference>
<dbReference type="FunFam" id="2.70.170.10:FF:000012">
    <property type="entry name" value="Nicotinic acetylcholine receptor subunit gamma"/>
    <property type="match status" value="1"/>
</dbReference>
<dbReference type="Gene3D" id="2.70.170.10">
    <property type="entry name" value="Neurotransmitter-gated ion-channel ligand-binding domain"/>
    <property type="match status" value="1"/>
</dbReference>
<dbReference type="Gene3D" id="1.20.58.390">
    <property type="entry name" value="Neurotransmitter-gated ion-channel transmembrane domain"/>
    <property type="match status" value="2"/>
</dbReference>
<dbReference type="InterPro" id="IPR006202">
    <property type="entry name" value="Neur_chan_lig-bd"/>
</dbReference>
<dbReference type="InterPro" id="IPR036734">
    <property type="entry name" value="Neur_chan_lig-bd_sf"/>
</dbReference>
<dbReference type="InterPro" id="IPR006201">
    <property type="entry name" value="Neur_channel"/>
</dbReference>
<dbReference type="InterPro" id="IPR036719">
    <property type="entry name" value="Neuro-gated_channel_TM_sf"/>
</dbReference>
<dbReference type="InterPro" id="IPR038050">
    <property type="entry name" value="Neuro_actylchol_rec"/>
</dbReference>
<dbReference type="InterPro" id="IPR006029">
    <property type="entry name" value="Neurotrans-gated_channel_TM"/>
</dbReference>
<dbReference type="InterPro" id="IPR018000">
    <property type="entry name" value="Neurotransmitter_ion_chnl_CS"/>
</dbReference>
<dbReference type="InterPro" id="IPR002394">
    <property type="entry name" value="Nicotinic_acetylcholine_rcpt"/>
</dbReference>
<dbReference type="NCBIfam" id="TIGR00860">
    <property type="entry name" value="LIC"/>
    <property type="match status" value="1"/>
</dbReference>
<dbReference type="PANTHER" id="PTHR18945">
    <property type="entry name" value="NEUROTRANSMITTER GATED ION CHANNEL"/>
    <property type="match status" value="1"/>
</dbReference>
<dbReference type="Pfam" id="PF02931">
    <property type="entry name" value="Neur_chan_LBD"/>
    <property type="match status" value="1"/>
</dbReference>
<dbReference type="Pfam" id="PF02932">
    <property type="entry name" value="Neur_chan_memb"/>
    <property type="match status" value="1"/>
</dbReference>
<dbReference type="PRINTS" id="PR00254">
    <property type="entry name" value="NICOTINICR"/>
</dbReference>
<dbReference type="PRINTS" id="PR00252">
    <property type="entry name" value="NRIONCHANNEL"/>
</dbReference>
<dbReference type="SUPFAM" id="SSF90112">
    <property type="entry name" value="Neurotransmitter-gated ion-channel transmembrane pore"/>
    <property type="match status" value="1"/>
</dbReference>
<dbReference type="SUPFAM" id="SSF63712">
    <property type="entry name" value="Nicotinic receptor ligand binding domain-like"/>
    <property type="match status" value="1"/>
</dbReference>
<dbReference type="PROSITE" id="PS00236">
    <property type="entry name" value="NEUROTR_ION_CHANNEL"/>
    <property type="match status" value="1"/>
</dbReference>
<proteinExistence type="evidence at transcript level"/>
<keyword id="KW-1003">Cell membrane</keyword>
<keyword id="KW-1015">Disulfide bond</keyword>
<keyword id="KW-0325">Glycoprotein</keyword>
<keyword id="KW-0407">Ion channel</keyword>
<keyword id="KW-0406">Ion transport</keyword>
<keyword id="KW-1071">Ligand-gated ion channel</keyword>
<keyword id="KW-0472">Membrane</keyword>
<keyword id="KW-0597">Phosphoprotein</keyword>
<keyword id="KW-0628">Postsynaptic cell membrane</keyword>
<keyword id="KW-0675">Receptor</keyword>
<keyword id="KW-1185">Reference proteome</keyword>
<keyword id="KW-0732">Signal</keyword>
<keyword id="KW-0770">Synapse</keyword>
<keyword id="KW-0812">Transmembrane</keyword>
<keyword id="KW-1133">Transmembrane helix</keyword>
<keyword id="KW-0813">Transport</keyword>
<sequence length="501" mass="57027">MALGALLLILGILGTPLAPGARGSEAEGQLLKKLFSDYDSSVRPAQEVGDRVGVSIGLTLAQLISLNEKDEEMSTKVYLDLEWTDYRLSWDPAEHDGIESLRVTAESVWLPDVVLLNNNDGNFDVALDINVVVSFEGSVRWQPPGLYRSSCSIQVTYFPFDWQNCTMVFSSYSYDSSEVSLKTGPDPDGQERQEIYIHEGTFIENGQWEIIHKPSRLIHLPGDRRGGKEGHREEVIFYLIIRRKPLFYLVNVIAPCILITLLAIFVFYLPPDAGEKMGLSIFALLTLTVFLLLLADKVPETSLAVPIIIKYLMFTMILVTFSVILSVVVLNLHHRSPHTHQMPFWVRQIFIHKLPPYLGLKRPKPERDQLPEPHHSFSPRSGWGRGTDEYFIRKPPCDFLFPKLNRFQPESPAPDLRRFIDGPPRAVGLPQELREVISSISYMARQLQEQEDHDALKEDWQFVAMVVDRLFLWTFIVFTSVGTLVIFLDATYHLPPPEPFP</sequence>
<comment type="function">
    <text>After binding acetylcholine, the AChR responds by an extensive change in conformation that affects all subunits and leads to opening of an ion-conducting channel across the plasma membrane.</text>
</comment>
<comment type="catalytic activity">
    <reaction evidence="2">
        <text>K(+)(in) = K(+)(out)</text>
        <dbReference type="Rhea" id="RHEA:29463"/>
        <dbReference type="ChEBI" id="CHEBI:29103"/>
    </reaction>
</comment>
<comment type="catalytic activity">
    <reaction evidence="2">
        <text>Na(+)(in) = Na(+)(out)</text>
        <dbReference type="Rhea" id="RHEA:34963"/>
        <dbReference type="ChEBI" id="CHEBI:29101"/>
    </reaction>
</comment>
<comment type="subunit">
    <text evidence="3">Pentamer of two alpha chains, and one each of the beta, delta, and gamma (in immature muscle) or epsilon (in mature muscle) chains. The muscle heteropentamer composed of alpha-1, beta-1, delta, epsilon subunits interacts with the alpha-conotoxin ImII.</text>
</comment>
<comment type="subcellular location">
    <subcellularLocation>
        <location>Postsynaptic cell membrane</location>
        <topology>Multi-pass membrane protein</topology>
    </subcellularLocation>
    <subcellularLocation>
        <location>Cell membrane</location>
        <topology>Multi-pass membrane protein</topology>
    </subcellularLocation>
</comment>
<comment type="similarity">
    <text evidence="6">Belongs to the ligand-gated ion channel (TC 1.A.9) family. Acetylcholine receptor (TC 1.A.9.1) subfamily. Beta-1/CHRNB1 sub-subfamily.</text>
</comment>
<organism>
    <name type="scientific">Rattus norvegicus</name>
    <name type="common">Rat</name>
    <dbReference type="NCBI Taxonomy" id="10116"/>
    <lineage>
        <taxon>Eukaryota</taxon>
        <taxon>Metazoa</taxon>
        <taxon>Chordata</taxon>
        <taxon>Craniata</taxon>
        <taxon>Vertebrata</taxon>
        <taxon>Euteleostomi</taxon>
        <taxon>Mammalia</taxon>
        <taxon>Eutheria</taxon>
        <taxon>Euarchontoglires</taxon>
        <taxon>Glires</taxon>
        <taxon>Rodentia</taxon>
        <taxon>Myomorpha</taxon>
        <taxon>Muroidea</taxon>
        <taxon>Muridae</taxon>
        <taxon>Murinae</taxon>
        <taxon>Rattus</taxon>
    </lineage>
</organism>